<sequence length="78" mass="8730">MALSRGTFYFGLALFFIVVELPSGSWAGLEYSQSFPGGEFAVCETCRLGRGKCRRTCLDSEKIAGKCKLNFFCCRERI</sequence>
<organism>
    <name type="scientific">Rattus norvegicus</name>
    <name type="common">Rat</name>
    <dbReference type="NCBI Taxonomy" id="10116"/>
    <lineage>
        <taxon>Eukaryota</taxon>
        <taxon>Metazoa</taxon>
        <taxon>Chordata</taxon>
        <taxon>Craniata</taxon>
        <taxon>Vertebrata</taxon>
        <taxon>Euteleostomi</taxon>
        <taxon>Mammalia</taxon>
        <taxon>Eutheria</taxon>
        <taxon>Euarchontoglires</taxon>
        <taxon>Glires</taxon>
        <taxon>Rodentia</taxon>
        <taxon>Myomorpha</taxon>
        <taxon>Muroidea</taxon>
        <taxon>Muridae</taxon>
        <taxon>Murinae</taxon>
        <taxon>Rattus</taxon>
    </lineage>
</organism>
<name>DFB12_RAT</name>
<keyword id="KW-0044">Antibiotic</keyword>
<keyword id="KW-0929">Antimicrobial</keyword>
<keyword id="KW-0211">Defensin</keyword>
<keyword id="KW-1015">Disulfide bond</keyword>
<keyword id="KW-1185">Reference proteome</keyword>
<keyword id="KW-0964">Secreted</keyword>
<keyword id="KW-0732">Signal</keyword>
<evidence type="ECO:0000250" key="1"/>
<evidence type="ECO:0000255" key="2"/>
<evidence type="ECO:0000305" key="3"/>
<gene>
    <name type="primary">Defb12</name>
</gene>
<protein>
    <recommendedName>
        <fullName>Beta-defensin 12</fullName>
        <shortName>BD-12</shortName>
    </recommendedName>
    <alternativeName>
        <fullName>Defensin, beta 12</fullName>
    </alternativeName>
</protein>
<dbReference type="EMBL" id="AY621344">
    <property type="protein sequence ID" value="AAT51883.1"/>
    <property type="molecule type" value="mRNA"/>
</dbReference>
<dbReference type="RefSeq" id="NP_001032603.1">
    <property type="nucleotide sequence ID" value="NM_001037514.1"/>
</dbReference>
<dbReference type="RefSeq" id="XP_008771555.1">
    <property type="nucleotide sequence ID" value="XM_008773333.1"/>
</dbReference>
<dbReference type="SMR" id="Q32ZH9"/>
<dbReference type="FunCoup" id="Q32ZH9">
    <property type="interactions" value="3"/>
</dbReference>
<dbReference type="STRING" id="10116.ENSRNOP00000045210"/>
<dbReference type="PaxDb" id="10116-ENSRNOP00000045210"/>
<dbReference type="Ensembl" id="ENSRNOT00000044094.4">
    <property type="protein sequence ID" value="ENSRNOP00000045210.3"/>
    <property type="gene ID" value="ENSRNOG00000038155.3"/>
</dbReference>
<dbReference type="GeneID" id="641643"/>
<dbReference type="KEGG" id="rno:641643"/>
<dbReference type="UCSC" id="RGD:1564879">
    <property type="organism name" value="rat"/>
</dbReference>
<dbReference type="AGR" id="RGD:1564879"/>
<dbReference type="AGR" id="RGD:41355023"/>
<dbReference type="CTD" id="504180"/>
<dbReference type="RGD" id="1564879">
    <property type="gene designation" value="Defb12"/>
</dbReference>
<dbReference type="eggNOG" id="ENOG502TE24">
    <property type="taxonomic scope" value="Eukaryota"/>
</dbReference>
<dbReference type="GeneTree" id="ENSGT00390000002317"/>
<dbReference type="HOGENOM" id="CLU_197691_0_0_1"/>
<dbReference type="InParanoid" id="Q32ZH9"/>
<dbReference type="OrthoDB" id="9511204at2759"/>
<dbReference type="PhylomeDB" id="Q32ZH9"/>
<dbReference type="PRO" id="PR:Q32ZH9"/>
<dbReference type="Proteomes" id="UP000002494">
    <property type="component" value="Chromosome 16"/>
</dbReference>
<dbReference type="Bgee" id="ENSRNOG00000038155">
    <property type="expression patterns" value="Expressed in kidney and 1 other cell type or tissue"/>
</dbReference>
<dbReference type="GO" id="GO:0005576">
    <property type="term" value="C:extracellular region"/>
    <property type="evidence" value="ECO:0007669"/>
    <property type="project" value="UniProtKB-SubCell"/>
</dbReference>
<dbReference type="GO" id="GO:0042742">
    <property type="term" value="P:defense response to bacterium"/>
    <property type="evidence" value="ECO:0007669"/>
    <property type="project" value="UniProtKB-KW"/>
</dbReference>
<dbReference type="GO" id="GO:0045087">
    <property type="term" value="P:innate immune response"/>
    <property type="evidence" value="ECO:0007669"/>
    <property type="project" value="InterPro"/>
</dbReference>
<dbReference type="InterPro" id="IPR025933">
    <property type="entry name" value="Beta_defensin_dom"/>
</dbReference>
<dbReference type="Pfam" id="PF13841">
    <property type="entry name" value="Defensin_beta_2"/>
    <property type="match status" value="1"/>
</dbReference>
<comment type="function">
    <text evidence="1">Has antibacterial activity.</text>
</comment>
<comment type="subcellular location">
    <subcellularLocation>
        <location evidence="1">Secreted</location>
    </subcellularLocation>
</comment>
<comment type="similarity">
    <text evidence="3">Belongs to the beta-defensin family.</text>
</comment>
<feature type="signal peptide" evidence="2">
    <location>
        <begin position="1"/>
        <end position="27"/>
    </location>
</feature>
<feature type="chain" id="PRO_0000352697" description="Beta-defensin 12">
    <location>
        <begin position="28"/>
        <end position="78"/>
    </location>
</feature>
<feature type="disulfide bond" evidence="1">
    <location>
        <begin position="46"/>
        <end position="73"/>
    </location>
</feature>
<feature type="disulfide bond" evidence="1">
    <location>
        <begin position="53"/>
        <end position="67"/>
    </location>
</feature>
<feature type="disulfide bond" evidence="1">
    <location>
        <begin position="57"/>
        <end position="74"/>
    </location>
</feature>
<accession>Q32ZH9</accession>
<proteinExistence type="inferred from homology"/>
<reference key="1">
    <citation type="journal article" date="2005" name="Physiol. Genomics">
        <title>Cross-species analysis of the mammalian beta-defensin gene family: presence of syntenic gene clusters and preferential expression in the male reproductive tract.</title>
        <authorList>
            <person name="Patil A.A."/>
            <person name="Cai Y."/>
            <person name="Sang Y."/>
            <person name="Blecha F."/>
            <person name="Zhang G."/>
        </authorList>
    </citation>
    <scope>NUCLEOTIDE SEQUENCE [MRNA]</scope>
</reference>